<keyword id="KW-0002">3D-structure</keyword>
<keyword id="KW-1185">Reference proteome</keyword>
<keyword id="KW-0687">Ribonucleoprotein</keyword>
<keyword id="KW-0689">Ribosomal protein</keyword>
<evidence type="ECO:0000255" key="1">
    <source>
        <dbReference type="HAMAP-Rule" id="MF_00374"/>
    </source>
</evidence>
<evidence type="ECO:0000305" key="2"/>
<evidence type="ECO:0007829" key="3">
    <source>
        <dbReference type="PDB" id="5XYM"/>
    </source>
</evidence>
<gene>
    <name evidence="1" type="primary">rpmC</name>
    <name type="ordered locus">MSMEG_1444</name>
    <name type="ordered locus">MSMEI_1408</name>
</gene>
<proteinExistence type="evidence at protein level"/>
<organism>
    <name type="scientific">Mycolicibacterium smegmatis (strain ATCC 700084 / mc(2)155)</name>
    <name type="common">Mycobacterium smegmatis</name>
    <dbReference type="NCBI Taxonomy" id="246196"/>
    <lineage>
        <taxon>Bacteria</taxon>
        <taxon>Bacillati</taxon>
        <taxon>Actinomycetota</taxon>
        <taxon>Actinomycetes</taxon>
        <taxon>Mycobacteriales</taxon>
        <taxon>Mycobacteriaceae</taxon>
        <taxon>Mycolicibacterium</taxon>
    </lineage>
</organism>
<reference key="1">
    <citation type="submission" date="2006-10" db="EMBL/GenBank/DDBJ databases">
        <authorList>
            <person name="Fleischmann R.D."/>
            <person name="Dodson R.J."/>
            <person name="Haft D.H."/>
            <person name="Merkel J.S."/>
            <person name="Nelson W.C."/>
            <person name="Fraser C.M."/>
        </authorList>
    </citation>
    <scope>NUCLEOTIDE SEQUENCE [LARGE SCALE GENOMIC DNA]</scope>
    <source>
        <strain>ATCC 700084 / mc(2)155</strain>
    </source>
</reference>
<reference key="2">
    <citation type="journal article" date="2007" name="Genome Biol.">
        <title>Interrupted coding sequences in Mycobacterium smegmatis: authentic mutations or sequencing errors?</title>
        <authorList>
            <person name="Deshayes C."/>
            <person name="Perrodou E."/>
            <person name="Gallien S."/>
            <person name="Euphrasie D."/>
            <person name="Schaeffer C."/>
            <person name="Van-Dorsselaer A."/>
            <person name="Poch O."/>
            <person name="Lecompte O."/>
            <person name="Reyrat J.-M."/>
        </authorList>
    </citation>
    <scope>NUCLEOTIDE SEQUENCE [LARGE SCALE GENOMIC DNA]</scope>
    <source>
        <strain>ATCC 700084 / mc(2)155</strain>
    </source>
</reference>
<reference key="3">
    <citation type="journal article" date="2009" name="Genome Res.">
        <title>Ortho-proteogenomics: multiple proteomes investigation through orthology and a new MS-based protocol.</title>
        <authorList>
            <person name="Gallien S."/>
            <person name="Perrodou E."/>
            <person name="Carapito C."/>
            <person name="Deshayes C."/>
            <person name="Reyrat J.-M."/>
            <person name="Van Dorsselaer A."/>
            <person name="Poch O."/>
            <person name="Schaeffer C."/>
            <person name="Lecompte O."/>
        </authorList>
    </citation>
    <scope>NUCLEOTIDE SEQUENCE [LARGE SCALE GENOMIC DNA]</scope>
    <source>
        <strain>ATCC 700084 / mc(2)155</strain>
    </source>
</reference>
<feature type="chain" id="PRO_1000007530" description="Large ribosomal subunit protein uL29">
    <location>
        <begin position="1"/>
        <end position="77"/>
    </location>
</feature>
<feature type="turn" evidence="3">
    <location>
        <begin position="8"/>
        <end position="10"/>
    </location>
</feature>
<feature type="helix" evidence="3">
    <location>
        <begin position="16"/>
        <end position="38"/>
    </location>
</feature>
<feature type="helix" evidence="3">
    <location>
        <begin position="45"/>
        <end position="65"/>
    </location>
</feature>
<accession>A0QSD9</accession>
<accession>I7G414</accession>
<sequence length="77" mass="8778">MAVGTTPGELRELTDDELKDKLRESKEELFNLRFQMATGQLSNNRRLRTVRQEIARVYTVLRERELGLASGPAGEES</sequence>
<comment type="similarity">
    <text evidence="1">Belongs to the universal ribosomal protein uL29 family.</text>
</comment>
<name>RL29_MYCS2</name>
<dbReference type="EMBL" id="CP000480">
    <property type="protein sequence ID" value="ABK73490.1"/>
    <property type="molecule type" value="Genomic_DNA"/>
</dbReference>
<dbReference type="EMBL" id="CP001663">
    <property type="protein sequence ID" value="AFP37881.1"/>
    <property type="molecule type" value="Genomic_DNA"/>
</dbReference>
<dbReference type="RefSeq" id="WP_003892831.1">
    <property type="nucleotide sequence ID" value="NZ_SIJM01000016.1"/>
</dbReference>
<dbReference type="RefSeq" id="YP_885827.1">
    <property type="nucleotide sequence ID" value="NC_008596.1"/>
</dbReference>
<dbReference type="PDB" id="5O60">
    <property type="method" value="EM"/>
    <property type="resolution" value="3.20 A"/>
    <property type="chains" value="Z=1-77"/>
</dbReference>
<dbReference type="PDB" id="5O61">
    <property type="method" value="EM"/>
    <property type="resolution" value="3.31 A"/>
    <property type="chains" value="Z=1-77"/>
</dbReference>
<dbReference type="PDB" id="5XYM">
    <property type="method" value="EM"/>
    <property type="resolution" value="3.08 A"/>
    <property type="chains" value="Y=1-77"/>
</dbReference>
<dbReference type="PDB" id="5ZEB">
    <property type="method" value="EM"/>
    <property type="resolution" value="3.40 A"/>
    <property type="chains" value="Z=1-77"/>
</dbReference>
<dbReference type="PDB" id="5ZEP">
    <property type="method" value="EM"/>
    <property type="resolution" value="3.40 A"/>
    <property type="chains" value="Z=1-77"/>
</dbReference>
<dbReference type="PDB" id="5ZET">
    <property type="method" value="EM"/>
    <property type="resolution" value="3.20 A"/>
    <property type="chains" value="Z=1-77"/>
</dbReference>
<dbReference type="PDB" id="6DZI">
    <property type="method" value="EM"/>
    <property type="resolution" value="3.46 A"/>
    <property type="chains" value="Z=4-67"/>
</dbReference>
<dbReference type="PDB" id="6DZP">
    <property type="method" value="EM"/>
    <property type="resolution" value="3.42 A"/>
    <property type="chains" value="Z=1-77"/>
</dbReference>
<dbReference type="PDB" id="7S0S">
    <property type="method" value="EM"/>
    <property type="resolution" value="3.05 A"/>
    <property type="chains" value="a=4-67"/>
</dbReference>
<dbReference type="PDB" id="7XAM">
    <property type="method" value="EM"/>
    <property type="resolution" value="2.80 A"/>
    <property type="chains" value="Z=1-77"/>
</dbReference>
<dbReference type="PDB" id="7Y41">
    <property type="method" value="EM"/>
    <property type="resolution" value="4.10 A"/>
    <property type="chains" value="Z=1-77"/>
</dbReference>
<dbReference type="PDB" id="8FR8">
    <property type="method" value="EM"/>
    <property type="resolution" value="2.76 A"/>
    <property type="chains" value="6=4-67"/>
</dbReference>
<dbReference type="PDB" id="8KAB">
    <property type="method" value="EM"/>
    <property type="resolution" value="3.30 A"/>
    <property type="chains" value="Z=1-77"/>
</dbReference>
<dbReference type="PDB" id="8V9J">
    <property type="method" value="EM"/>
    <property type="resolution" value="3.10 A"/>
    <property type="chains" value="1=1-77"/>
</dbReference>
<dbReference type="PDB" id="8V9K">
    <property type="method" value="EM"/>
    <property type="resolution" value="3.10 A"/>
    <property type="chains" value="1=1-77"/>
</dbReference>
<dbReference type="PDB" id="8V9L">
    <property type="method" value="EM"/>
    <property type="resolution" value="3.00 A"/>
    <property type="chains" value="1=1-77"/>
</dbReference>
<dbReference type="PDB" id="8VIO">
    <property type="method" value="EM"/>
    <property type="resolution" value="3.26 A"/>
    <property type="chains" value="Z=1-77"/>
</dbReference>
<dbReference type="PDB" id="8VK0">
    <property type="method" value="EM"/>
    <property type="resolution" value="3.14 A"/>
    <property type="chains" value="Z=1-77"/>
</dbReference>
<dbReference type="PDB" id="8VK7">
    <property type="method" value="EM"/>
    <property type="resolution" value="3.09 A"/>
    <property type="chains" value="Z=1-77"/>
</dbReference>
<dbReference type="PDB" id="8VKI">
    <property type="method" value="EM"/>
    <property type="resolution" value="2.96 A"/>
    <property type="chains" value="Z=1-77"/>
</dbReference>
<dbReference type="PDB" id="8VKW">
    <property type="method" value="EM"/>
    <property type="resolution" value="3.44 A"/>
    <property type="chains" value="Z=1-77"/>
</dbReference>
<dbReference type="PDB" id="8VR4">
    <property type="method" value="EM"/>
    <property type="resolution" value="2.80 A"/>
    <property type="chains" value="Z=1-77"/>
</dbReference>
<dbReference type="PDB" id="8VR8">
    <property type="method" value="EM"/>
    <property type="resolution" value="3.25 A"/>
    <property type="chains" value="Z=1-77"/>
</dbReference>
<dbReference type="PDB" id="8VRL">
    <property type="method" value="EM"/>
    <property type="resolution" value="3.33 A"/>
    <property type="chains" value="Z=1-77"/>
</dbReference>
<dbReference type="PDB" id="8WHX">
    <property type="method" value="EM"/>
    <property type="resolution" value="2.80 A"/>
    <property type="chains" value="2=1-77"/>
</dbReference>
<dbReference type="PDB" id="8WHY">
    <property type="method" value="EM"/>
    <property type="resolution" value="2.70 A"/>
    <property type="chains" value="2=1-77"/>
</dbReference>
<dbReference type="PDB" id="8WI7">
    <property type="method" value="EM"/>
    <property type="resolution" value="3.50 A"/>
    <property type="chains" value="2=1-77"/>
</dbReference>
<dbReference type="PDB" id="8WI8">
    <property type="method" value="EM"/>
    <property type="resolution" value="2.70 A"/>
    <property type="chains" value="2=1-77"/>
</dbReference>
<dbReference type="PDB" id="8WIB">
    <property type="method" value="EM"/>
    <property type="resolution" value="3.50 A"/>
    <property type="chains" value="2=1-77"/>
</dbReference>
<dbReference type="PDB" id="8WIC">
    <property type="method" value="EM"/>
    <property type="resolution" value="3.50 A"/>
    <property type="chains" value="2=1-77"/>
</dbReference>
<dbReference type="PDB" id="8XZ3">
    <property type="method" value="EM"/>
    <property type="resolution" value="3.60 A"/>
    <property type="chains" value="Z=4-67"/>
</dbReference>
<dbReference type="PDBsum" id="5O60"/>
<dbReference type="PDBsum" id="5O61"/>
<dbReference type="PDBsum" id="5XYM"/>
<dbReference type="PDBsum" id="5ZEB"/>
<dbReference type="PDBsum" id="5ZEP"/>
<dbReference type="PDBsum" id="5ZET"/>
<dbReference type="PDBsum" id="6DZI"/>
<dbReference type="PDBsum" id="6DZP"/>
<dbReference type="PDBsum" id="7S0S"/>
<dbReference type="PDBsum" id="7XAM"/>
<dbReference type="PDBsum" id="7Y41"/>
<dbReference type="PDBsum" id="8FR8"/>
<dbReference type="PDBsum" id="8KAB"/>
<dbReference type="PDBsum" id="8V9J"/>
<dbReference type="PDBsum" id="8V9K"/>
<dbReference type="PDBsum" id="8V9L"/>
<dbReference type="PDBsum" id="8VIO"/>
<dbReference type="PDBsum" id="8VK0"/>
<dbReference type="PDBsum" id="8VK7"/>
<dbReference type="PDBsum" id="8VKI"/>
<dbReference type="PDBsum" id="8VKW"/>
<dbReference type="PDBsum" id="8VR4"/>
<dbReference type="PDBsum" id="8VR8"/>
<dbReference type="PDBsum" id="8VRL"/>
<dbReference type="PDBsum" id="8WHX"/>
<dbReference type="PDBsum" id="8WHY"/>
<dbReference type="PDBsum" id="8WI7"/>
<dbReference type="PDBsum" id="8WI8"/>
<dbReference type="PDBsum" id="8WIB"/>
<dbReference type="PDBsum" id="8WIC"/>
<dbReference type="PDBsum" id="8XZ3"/>
<dbReference type="EMDB" id="EMD-29397"/>
<dbReference type="EMDB" id="EMD-33096"/>
<dbReference type="EMDB" id="EMD-33599"/>
<dbReference type="EMDB" id="EMD-37007"/>
<dbReference type="EMDB" id="EMD-3750"/>
<dbReference type="EMDB" id="EMD-3751"/>
<dbReference type="EMDB" id="EMD-37551"/>
<dbReference type="EMDB" id="EMD-37552"/>
<dbReference type="EMDB" id="EMD-37559"/>
<dbReference type="EMDB" id="EMD-37560"/>
<dbReference type="EMDB" id="EMD-37562"/>
<dbReference type="EMDB" id="EMD-37563"/>
<dbReference type="EMDB" id="EMD-38788"/>
<dbReference type="EMDB" id="EMD-43074"/>
<dbReference type="EMDB" id="EMD-43075"/>
<dbReference type="EMDB" id="EMD-43076"/>
<dbReference type="EMDB" id="EMD-43267"/>
<dbReference type="EMDB" id="EMD-43294"/>
<dbReference type="EMDB" id="EMD-43305"/>
<dbReference type="EMDB" id="EMD-43317"/>
<dbReference type="EMDB" id="EMD-43333"/>
<dbReference type="EMDB" id="EMD-43476"/>
<dbReference type="EMDB" id="EMD-43477"/>
<dbReference type="EMDB" id="EMD-43484"/>
<dbReference type="EMDB" id="EMD-6789"/>
<dbReference type="EMDB" id="EMD-6920"/>
<dbReference type="EMDB" id="EMD-6921"/>
<dbReference type="EMDB" id="EMD-6922"/>
<dbReference type="EMDB" id="EMD-8932"/>
<dbReference type="EMDB" id="EMD-8937"/>
<dbReference type="SMR" id="A0QSD9"/>
<dbReference type="IntAct" id="A0QSD9">
    <property type="interactions" value="2"/>
</dbReference>
<dbReference type="STRING" id="246196.MSMEG_1444"/>
<dbReference type="PaxDb" id="246196-MSMEI_1408"/>
<dbReference type="GeneID" id="93456288"/>
<dbReference type="KEGG" id="msb:LJ00_07205"/>
<dbReference type="KEGG" id="msg:MSMEI_1408"/>
<dbReference type="KEGG" id="msm:MSMEG_1444"/>
<dbReference type="PATRIC" id="fig|246196.19.peg.1430"/>
<dbReference type="eggNOG" id="COG0255">
    <property type="taxonomic scope" value="Bacteria"/>
</dbReference>
<dbReference type="OrthoDB" id="9815192at2"/>
<dbReference type="Proteomes" id="UP000000757">
    <property type="component" value="Chromosome"/>
</dbReference>
<dbReference type="Proteomes" id="UP000006158">
    <property type="component" value="Chromosome"/>
</dbReference>
<dbReference type="GO" id="GO:0022625">
    <property type="term" value="C:cytosolic large ribosomal subunit"/>
    <property type="evidence" value="ECO:0007669"/>
    <property type="project" value="TreeGrafter"/>
</dbReference>
<dbReference type="GO" id="GO:0003735">
    <property type="term" value="F:structural constituent of ribosome"/>
    <property type="evidence" value="ECO:0007669"/>
    <property type="project" value="InterPro"/>
</dbReference>
<dbReference type="GO" id="GO:0006412">
    <property type="term" value="P:translation"/>
    <property type="evidence" value="ECO:0007669"/>
    <property type="project" value="UniProtKB-UniRule"/>
</dbReference>
<dbReference type="CDD" id="cd00427">
    <property type="entry name" value="Ribosomal_L29_HIP"/>
    <property type="match status" value="1"/>
</dbReference>
<dbReference type="FunFam" id="1.10.287.310:FF:000001">
    <property type="entry name" value="50S ribosomal protein L29"/>
    <property type="match status" value="1"/>
</dbReference>
<dbReference type="Gene3D" id="1.10.287.310">
    <property type="match status" value="1"/>
</dbReference>
<dbReference type="HAMAP" id="MF_00374">
    <property type="entry name" value="Ribosomal_uL29"/>
    <property type="match status" value="1"/>
</dbReference>
<dbReference type="InterPro" id="IPR050063">
    <property type="entry name" value="Ribosomal_protein_uL29"/>
</dbReference>
<dbReference type="InterPro" id="IPR001854">
    <property type="entry name" value="Ribosomal_uL29"/>
</dbReference>
<dbReference type="InterPro" id="IPR018254">
    <property type="entry name" value="Ribosomal_uL29_CS"/>
</dbReference>
<dbReference type="InterPro" id="IPR036049">
    <property type="entry name" value="Ribosomal_uL29_sf"/>
</dbReference>
<dbReference type="NCBIfam" id="TIGR00012">
    <property type="entry name" value="L29"/>
    <property type="match status" value="1"/>
</dbReference>
<dbReference type="PANTHER" id="PTHR10916">
    <property type="entry name" value="60S RIBOSOMAL PROTEIN L35/50S RIBOSOMAL PROTEIN L29"/>
    <property type="match status" value="1"/>
</dbReference>
<dbReference type="PANTHER" id="PTHR10916:SF0">
    <property type="entry name" value="LARGE RIBOSOMAL SUBUNIT PROTEIN UL29C"/>
    <property type="match status" value="1"/>
</dbReference>
<dbReference type="Pfam" id="PF00831">
    <property type="entry name" value="Ribosomal_L29"/>
    <property type="match status" value="1"/>
</dbReference>
<dbReference type="SUPFAM" id="SSF46561">
    <property type="entry name" value="Ribosomal protein L29 (L29p)"/>
    <property type="match status" value="1"/>
</dbReference>
<dbReference type="PROSITE" id="PS00579">
    <property type="entry name" value="RIBOSOMAL_L29"/>
    <property type="match status" value="1"/>
</dbReference>
<protein>
    <recommendedName>
        <fullName evidence="1">Large ribosomal subunit protein uL29</fullName>
    </recommendedName>
    <alternativeName>
        <fullName evidence="2">50S ribosomal protein L29</fullName>
    </alternativeName>
</protein>